<proteinExistence type="predicted"/>
<gene>
    <name type="primary">ybjN</name>
    <name type="ordered locus">SF0807</name>
    <name type="ordered locus">S0849</name>
</gene>
<accession>P0AAY9</accession>
<accession>P75815</accession>
<feature type="chain" id="PRO_0000168746" description="Uncharacterized protein YbjN">
    <location>
        <begin position="1"/>
        <end position="158"/>
    </location>
</feature>
<reference key="1">
    <citation type="journal article" date="2002" name="Nucleic Acids Res.">
        <title>Genome sequence of Shigella flexneri 2a: insights into pathogenicity through comparison with genomes of Escherichia coli K12 and O157.</title>
        <authorList>
            <person name="Jin Q."/>
            <person name="Yuan Z."/>
            <person name="Xu J."/>
            <person name="Wang Y."/>
            <person name="Shen Y."/>
            <person name="Lu W."/>
            <person name="Wang J."/>
            <person name="Liu H."/>
            <person name="Yang J."/>
            <person name="Yang F."/>
            <person name="Zhang X."/>
            <person name="Zhang J."/>
            <person name="Yang G."/>
            <person name="Wu H."/>
            <person name="Qu D."/>
            <person name="Dong J."/>
            <person name="Sun L."/>
            <person name="Xue Y."/>
            <person name="Zhao A."/>
            <person name="Gao Y."/>
            <person name="Zhu J."/>
            <person name="Kan B."/>
            <person name="Ding K."/>
            <person name="Chen S."/>
            <person name="Cheng H."/>
            <person name="Yao Z."/>
            <person name="He B."/>
            <person name="Chen R."/>
            <person name="Ma D."/>
            <person name="Qiang B."/>
            <person name="Wen Y."/>
            <person name="Hou Y."/>
            <person name="Yu J."/>
        </authorList>
    </citation>
    <scope>NUCLEOTIDE SEQUENCE [LARGE SCALE GENOMIC DNA]</scope>
    <source>
        <strain>301 / Serotype 2a</strain>
    </source>
</reference>
<reference key="2">
    <citation type="journal article" date="2003" name="Infect. Immun.">
        <title>Complete genome sequence and comparative genomics of Shigella flexneri serotype 2a strain 2457T.</title>
        <authorList>
            <person name="Wei J."/>
            <person name="Goldberg M.B."/>
            <person name="Burland V."/>
            <person name="Venkatesan M.M."/>
            <person name="Deng W."/>
            <person name="Fournier G."/>
            <person name="Mayhew G.F."/>
            <person name="Plunkett G. III"/>
            <person name="Rose D.J."/>
            <person name="Darling A."/>
            <person name="Mau B."/>
            <person name="Perna N.T."/>
            <person name="Payne S.M."/>
            <person name="Runyen-Janecky L.J."/>
            <person name="Zhou S."/>
            <person name="Schwartz D.C."/>
            <person name="Blattner F.R."/>
        </authorList>
    </citation>
    <scope>NUCLEOTIDE SEQUENCE [LARGE SCALE GENOMIC DNA]</scope>
    <source>
        <strain>ATCC 700930 / 2457T / Serotype 2a</strain>
    </source>
</reference>
<organism>
    <name type="scientific">Shigella flexneri</name>
    <dbReference type="NCBI Taxonomy" id="623"/>
    <lineage>
        <taxon>Bacteria</taxon>
        <taxon>Pseudomonadati</taxon>
        <taxon>Pseudomonadota</taxon>
        <taxon>Gammaproteobacteria</taxon>
        <taxon>Enterobacterales</taxon>
        <taxon>Enterobacteriaceae</taxon>
        <taxon>Shigella</taxon>
    </lineage>
</organism>
<sequence>MTSLVVPGLDTLRQWLDDLGMSFFECDNCQALHLPHMQNFDGVFDAKIDLIDNTILFSAMAEVRPSAVLPLAADLSAINASSLTVKAFLDMQDDNLPKLVVCQSLSVMQGVTYEQFAWFVRQSEEQISMVILEANAHQLLLPTDDEGQNNVTENYFLH</sequence>
<dbReference type="EMBL" id="AE005674">
    <property type="protein sequence ID" value="AAN42440.2"/>
    <property type="molecule type" value="Genomic_DNA"/>
</dbReference>
<dbReference type="EMBL" id="AE014073">
    <property type="protein sequence ID" value="AAP16312.1"/>
    <property type="molecule type" value="Genomic_DNA"/>
</dbReference>
<dbReference type="RefSeq" id="NP_706733.2">
    <property type="nucleotide sequence ID" value="NC_004337.2"/>
</dbReference>
<dbReference type="RefSeq" id="WP_000203025.1">
    <property type="nucleotide sequence ID" value="NZ_WPGW01000056.1"/>
</dbReference>
<dbReference type="SMR" id="P0AAY9"/>
<dbReference type="STRING" id="198214.SF0807"/>
<dbReference type="PaxDb" id="198214-SF0807"/>
<dbReference type="GeneID" id="1023761"/>
<dbReference type="KEGG" id="sfl:SF0807"/>
<dbReference type="KEGG" id="sfx:S0849"/>
<dbReference type="PATRIC" id="fig|198214.7.peg.935"/>
<dbReference type="HOGENOM" id="CLU_115861_0_0_6"/>
<dbReference type="Proteomes" id="UP000001006">
    <property type="component" value="Chromosome"/>
</dbReference>
<dbReference type="Proteomes" id="UP000002673">
    <property type="component" value="Chromosome"/>
</dbReference>
<dbReference type="CDD" id="cd17511">
    <property type="entry name" value="YbjN_AmyR-like"/>
    <property type="match status" value="1"/>
</dbReference>
<dbReference type="InterPro" id="IPR019660">
    <property type="entry name" value="Put_sensory_transdc_reg_YbjN"/>
</dbReference>
<dbReference type="Pfam" id="PF10722">
    <property type="entry name" value="YbjN"/>
    <property type="match status" value="1"/>
</dbReference>
<protein>
    <recommendedName>
        <fullName>Uncharacterized protein YbjN</fullName>
    </recommendedName>
</protein>
<name>YBJN_SHIFL</name>
<keyword id="KW-1185">Reference proteome</keyword>